<evidence type="ECO:0000255" key="1">
    <source>
        <dbReference type="HAMAP-Rule" id="MF_00040"/>
    </source>
</evidence>
<proteinExistence type="inferred from homology"/>
<sequence length="185" mass="20657">MANVIIEKAKERMTQSHQSLAREFGGIRAGRANASLLDRVHVEYYGVETPLNQIASITIPEARVLLVTPFDKSSLKDIERALNASDLGITPANDGSVIRLVIPALTEETRRDLAKEVKKVGENAKVAVRNIRRDAMDEAKKQEKAKEITEDELKTLEKDIQKVTDDAVKHIDDMTANKEKELLEV</sequence>
<keyword id="KW-0963">Cytoplasm</keyword>
<keyword id="KW-0648">Protein biosynthesis</keyword>
<gene>
    <name evidence="1" type="primary">frr</name>
    <name type="ordered locus">SPN23F08670</name>
</gene>
<accession>B8ZP45</accession>
<protein>
    <recommendedName>
        <fullName evidence="1">Ribosome-recycling factor</fullName>
        <shortName evidence="1">RRF</shortName>
    </recommendedName>
    <alternativeName>
        <fullName evidence="1">Ribosome-releasing factor</fullName>
    </alternativeName>
</protein>
<organism>
    <name type="scientific">Streptococcus pneumoniae (strain ATCC 700669 / Spain 23F-1)</name>
    <dbReference type="NCBI Taxonomy" id="561276"/>
    <lineage>
        <taxon>Bacteria</taxon>
        <taxon>Bacillati</taxon>
        <taxon>Bacillota</taxon>
        <taxon>Bacilli</taxon>
        <taxon>Lactobacillales</taxon>
        <taxon>Streptococcaceae</taxon>
        <taxon>Streptococcus</taxon>
    </lineage>
</organism>
<dbReference type="EMBL" id="FM211187">
    <property type="protein sequence ID" value="CAR68698.1"/>
    <property type="molecule type" value="Genomic_DNA"/>
</dbReference>
<dbReference type="RefSeq" id="WP_000024409.1">
    <property type="nucleotide sequence ID" value="NC_011900.1"/>
</dbReference>
<dbReference type="SMR" id="B8ZP45"/>
<dbReference type="KEGG" id="sne:SPN23F08670"/>
<dbReference type="HOGENOM" id="CLU_073981_2_0_9"/>
<dbReference type="GO" id="GO:0005737">
    <property type="term" value="C:cytoplasm"/>
    <property type="evidence" value="ECO:0007669"/>
    <property type="project" value="UniProtKB-SubCell"/>
</dbReference>
<dbReference type="GO" id="GO:0043023">
    <property type="term" value="F:ribosomal large subunit binding"/>
    <property type="evidence" value="ECO:0007669"/>
    <property type="project" value="TreeGrafter"/>
</dbReference>
<dbReference type="GO" id="GO:0006415">
    <property type="term" value="P:translational termination"/>
    <property type="evidence" value="ECO:0007669"/>
    <property type="project" value="UniProtKB-UniRule"/>
</dbReference>
<dbReference type="CDD" id="cd00520">
    <property type="entry name" value="RRF"/>
    <property type="match status" value="1"/>
</dbReference>
<dbReference type="FunFam" id="1.10.132.20:FF:000001">
    <property type="entry name" value="Ribosome-recycling factor"/>
    <property type="match status" value="1"/>
</dbReference>
<dbReference type="FunFam" id="3.30.1360.40:FF:000001">
    <property type="entry name" value="Ribosome-recycling factor"/>
    <property type="match status" value="1"/>
</dbReference>
<dbReference type="Gene3D" id="3.30.1360.40">
    <property type="match status" value="1"/>
</dbReference>
<dbReference type="Gene3D" id="1.10.132.20">
    <property type="entry name" value="Ribosome-recycling factor"/>
    <property type="match status" value="1"/>
</dbReference>
<dbReference type="HAMAP" id="MF_00040">
    <property type="entry name" value="RRF"/>
    <property type="match status" value="1"/>
</dbReference>
<dbReference type="InterPro" id="IPR002661">
    <property type="entry name" value="Ribosome_recyc_fac"/>
</dbReference>
<dbReference type="InterPro" id="IPR023584">
    <property type="entry name" value="Ribosome_recyc_fac_dom"/>
</dbReference>
<dbReference type="InterPro" id="IPR036191">
    <property type="entry name" value="RRF_sf"/>
</dbReference>
<dbReference type="NCBIfam" id="TIGR00496">
    <property type="entry name" value="frr"/>
    <property type="match status" value="1"/>
</dbReference>
<dbReference type="PANTHER" id="PTHR20982:SF3">
    <property type="entry name" value="MITOCHONDRIAL RIBOSOME RECYCLING FACTOR PSEUDO 1"/>
    <property type="match status" value="1"/>
</dbReference>
<dbReference type="PANTHER" id="PTHR20982">
    <property type="entry name" value="RIBOSOME RECYCLING FACTOR"/>
    <property type="match status" value="1"/>
</dbReference>
<dbReference type="Pfam" id="PF01765">
    <property type="entry name" value="RRF"/>
    <property type="match status" value="1"/>
</dbReference>
<dbReference type="SUPFAM" id="SSF55194">
    <property type="entry name" value="Ribosome recycling factor, RRF"/>
    <property type="match status" value="1"/>
</dbReference>
<reference key="1">
    <citation type="journal article" date="2009" name="J. Bacteriol.">
        <title>Role of conjugative elements in the evolution of the multidrug-resistant pandemic clone Streptococcus pneumoniae Spain23F ST81.</title>
        <authorList>
            <person name="Croucher N.J."/>
            <person name="Walker D."/>
            <person name="Romero P."/>
            <person name="Lennard N."/>
            <person name="Paterson G.K."/>
            <person name="Bason N.C."/>
            <person name="Mitchell A.M."/>
            <person name="Quail M.A."/>
            <person name="Andrew P.W."/>
            <person name="Parkhill J."/>
            <person name="Bentley S.D."/>
            <person name="Mitchell T.J."/>
        </authorList>
    </citation>
    <scope>NUCLEOTIDE SEQUENCE [LARGE SCALE GENOMIC DNA]</scope>
    <source>
        <strain>ATCC 700669 / Spain 23F-1</strain>
    </source>
</reference>
<feature type="chain" id="PRO_1000194955" description="Ribosome-recycling factor">
    <location>
        <begin position="1"/>
        <end position="185"/>
    </location>
</feature>
<comment type="function">
    <text evidence="1">Responsible for the release of ribosomes from messenger RNA at the termination of protein biosynthesis. May increase the efficiency of translation by recycling ribosomes from one round of translation to another.</text>
</comment>
<comment type="subcellular location">
    <subcellularLocation>
        <location evidence="1">Cytoplasm</location>
    </subcellularLocation>
</comment>
<comment type="similarity">
    <text evidence="1">Belongs to the RRF family.</text>
</comment>
<name>RRF_STRPJ</name>